<gene>
    <name evidence="1" type="primary">rnpA</name>
    <name type="ordered locus">SAG0408</name>
</gene>
<feature type="chain" id="PRO_0000198535" description="Ribonuclease P protein component">
    <location>
        <begin position="1"/>
        <end position="109"/>
    </location>
</feature>
<protein>
    <recommendedName>
        <fullName evidence="1">Ribonuclease P protein component</fullName>
        <shortName evidence="1">RNase P protein</shortName>
        <shortName evidence="1">RNaseP protein</shortName>
        <ecNumber evidence="1">3.1.26.5</ecNumber>
    </recommendedName>
    <alternativeName>
        <fullName evidence="1">Protein C5</fullName>
    </alternativeName>
</protein>
<comment type="function">
    <text evidence="1">RNaseP catalyzes the removal of the 5'-leader sequence from pre-tRNA to produce the mature 5'-terminus. It can also cleave other RNA substrates such as 4.5S RNA. The protein component plays an auxiliary but essential role in vivo by binding to the 5'-leader sequence and broadening the substrate specificity of the ribozyme.</text>
</comment>
<comment type="catalytic activity">
    <reaction evidence="1">
        <text>Endonucleolytic cleavage of RNA, removing 5'-extranucleotides from tRNA precursor.</text>
        <dbReference type="EC" id="3.1.26.5"/>
    </reaction>
</comment>
<comment type="subunit">
    <text evidence="1">Consists of a catalytic RNA component (M1 or rnpB) and a protein subunit.</text>
</comment>
<comment type="similarity">
    <text evidence="1">Belongs to the RnpA family.</text>
</comment>
<organism>
    <name type="scientific">Streptococcus agalactiae serotype V (strain ATCC BAA-611 / 2603 V/R)</name>
    <dbReference type="NCBI Taxonomy" id="208435"/>
    <lineage>
        <taxon>Bacteria</taxon>
        <taxon>Bacillati</taxon>
        <taxon>Bacillota</taxon>
        <taxon>Bacilli</taxon>
        <taxon>Lactobacillales</taxon>
        <taxon>Streptococcaceae</taxon>
        <taxon>Streptococcus</taxon>
    </lineage>
</organism>
<reference key="1">
    <citation type="journal article" date="2002" name="Proc. Natl. Acad. Sci. U.S.A.">
        <title>Complete genome sequence and comparative genomic analysis of an emerging human pathogen, serotype V Streptococcus agalactiae.</title>
        <authorList>
            <person name="Tettelin H."/>
            <person name="Masignani V."/>
            <person name="Cieslewicz M.J."/>
            <person name="Eisen J.A."/>
            <person name="Peterson S.N."/>
            <person name="Wessels M.R."/>
            <person name="Paulsen I.T."/>
            <person name="Nelson K.E."/>
            <person name="Margarit I."/>
            <person name="Read T.D."/>
            <person name="Madoff L.C."/>
            <person name="Wolf A.M."/>
            <person name="Beanan M.J."/>
            <person name="Brinkac L.M."/>
            <person name="Daugherty S.C."/>
            <person name="DeBoy R.T."/>
            <person name="Durkin A.S."/>
            <person name="Kolonay J.F."/>
            <person name="Madupu R."/>
            <person name="Lewis M.R."/>
            <person name="Radune D."/>
            <person name="Fedorova N.B."/>
            <person name="Scanlan D."/>
            <person name="Khouri H.M."/>
            <person name="Mulligan S."/>
            <person name="Carty H.A."/>
            <person name="Cline R.T."/>
            <person name="Van Aken S.E."/>
            <person name="Gill J."/>
            <person name="Scarselli M."/>
            <person name="Mora M."/>
            <person name="Iacobini E.T."/>
            <person name="Brettoni C."/>
            <person name="Galli G."/>
            <person name="Mariani M."/>
            <person name="Vegni F."/>
            <person name="Maione D."/>
            <person name="Rinaudo D."/>
            <person name="Rappuoli R."/>
            <person name="Telford J.L."/>
            <person name="Kasper D.L."/>
            <person name="Grandi G."/>
            <person name="Fraser C.M."/>
        </authorList>
    </citation>
    <scope>NUCLEOTIDE SEQUENCE [LARGE SCALE GENOMIC DNA]</scope>
    <source>
        <strain>ATCC BAA-611 / 2603 V/R</strain>
    </source>
</reference>
<accession>Q8E1E7</accession>
<proteinExistence type="inferred from homology"/>
<dbReference type="EC" id="3.1.26.5" evidence="1"/>
<dbReference type="EMBL" id="AE009948">
    <property type="protein sequence ID" value="AAM99314.1"/>
    <property type="molecule type" value="Genomic_DNA"/>
</dbReference>
<dbReference type="RefSeq" id="NP_687442.1">
    <property type="nucleotide sequence ID" value="NC_004116.1"/>
</dbReference>
<dbReference type="RefSeq" id="WP_000754611.1">
    <property type="nucleotide sequence ID" value="NC_004116.1"/>
</dbReference>
<dbReference type="SMR" id="Q8E1E7"/>
<dbReference type="STRING" id="208435.SAG0408"/>
<dbReference type="KEGG" id="sag:SAG0408"/>
<dbReference type="PATRIC" id="fig|208435.3.peg.403"/>
<dbReference type="HOGENOM" id="CLU_117179_9_1_9"/>
<dbReference type="OrthoDB" id="9810867at2"/>
<dbReference type="Proteomes" id="UP000000821">
    <property type="component" value="Chromosome"/>
</dbReference>
<dbReference type="GO" id="GO:0030677">
    <property type="term" value="C:ribonuclease P complex"/>
    <property type="evidence" value="ECO:0007669"/>
    <property type="project" value="TreeGrafter"/>
</dbReference>
<dbReference type="GO" id="GO:0042781">
    <property type="term" value="F:3'-tRNA processing endoribonuclease activity"/>
    <property type="evidence" value="ECO:0007669"/>
    <property type="project" value="TreeGrafter"/>
</dbReference>
<dbReference type="GO" id="GO:0004526">
    <property type="term" value="F:ribonuclease P activity"/>
    <property type="evidence" value="ECO:0007669"/>
    <property type="project" value="UniProtKB-UniRule"/>
</dbReference>
<dbReference type="GO" id="GO:0000049">
    <property type="term" value="F:tRNA binding"/>
    <property type="evidence" value="ECO:0007669"/>
    <property type="project" value="UniProtKB-UniRule"/>
</dbReference>
<dbReference type="GO" id="GO:0001682">
    <property type="term" value="P:tRNA 5'-leader removal"/>
    <property type="evidence" value="ECO:0007669"/>
    <property type="project" value="UniProtKB-UniRule"/>
</dbReference>
<dbReference type="FunFam" id="3.30.230.10:FF:000021">
    <property type="entry name" value="Ribonuclease P protein component"/>
    <property type="match status" value="1"/>
</dbReference>
<dbReference type="Gene3D" id="3.30.230.10">
    <property type="match status" value="1"/>
</dbReference>
<dbReference type="HAMAP" id="MF_00227">
    <property type="entry name" value="RNase_P"/>
    <property type="match status" value="1"/>
</dbReference>
<dbReference type="InterPro" id="IPR020568">
    <property type="entry name" value="Ribosomal_Su5_D2-typ_SF"/>
</dbReference>
<dbReference type="InterPro" id="IPR014721">
    <property type="entry name" value="Ribsml_uS5_D2-typ_fold_subgr"/>
</dbReference>
<dbReference type="InterPro" id="IPR000100">
    <property type="entry name" value="RNase_P"/>
</dbReference>
<dbReference type="InterPro" id="IPR020539">
    <property type="entry name" value="RNase_P_CS"/>
</dbReference>
<dbReference type="NCBIfam" id="TIGR00188">
    <property type="entry name" value="rnpA"/>
    <property type="match status" value="1"/>
</dbReference>
<dbReference type="PANTHER" id="PTHR33992">
    <property type="entry name" value="RIBONUCLEASE P PROTEIN COMPONENT"/>
    <property type="match status" value="1"/>
</dbReference>
<dbReference type="PANTHER" id="PTHR33992:SF1">
    <property type="entry name" value="RIBONUCLEASE P PROTEIN COMPONENT"/>
    <property type="match status" value="1"/>
</dbReference>
<dbReference type="Pfam" id="PF00825">
    <property type="entry name" value="Ribonuclease_P"/>
    <property type="match status" value="1"/>
</dbReference>
<dbReference type="SUPFAM" id="SSF54211">
    <property type="entry name" value="Ribosomal protein S5 domain 2-like"/>
    <property type="match status" value="1"/>
</dbReference>
<dbReference type="PROSITE" id="PS00648">
    <property type="entry name" value="RIBONUCLEASE_P"/>
    <property type="match status" value="1"/>
</dbReference>
<evidence type="ECO:0000255" key="1">
    <source>
        <dbReference type="HAMAP-Rule" id="MF_00227"/>
    </source>
</evidence>
<sequence>MKKTYRVKSDKDFQMIFSRGKNVANRKFVIYYLEKEQKHFRVGISVSKKLGNAVVRNAIKRKIRHVLLSQKTALQDYDFVVIARKGVEELDYQALEKNLIHVLKIAGLI</sequence>
<name>RNPA_STRA5</name>
<keyword id="KW-0255">Endonuclease</keyword>
<keyword id="KW-0378">Hydrolase</keyword>
<keyword id="KW-0540">Nuclease</keyword>
<keyword id="KW-1185">Reference proteome</keyword>
<keyword id="KW-0694">RNA-binding</keyword>
<keyword id="KW-0819">tRNA processing</keyword>